<sequence>MKTTEYVAEILNELHNSAAYISNEEADQLADHILSSHQIFTAGAGRSGLMAKSFAMRLMHMGFNAHIVGEILTPPLAEGDLVIIGSGSGETKSLIHTAAKAKSLHGIVAALTINPESSIGKQADLIIRMPGSPKDQSNGSYKTIQPMGSLFEQTLLLFYDAVILKLMEKKGLDSETMFTHHANLE</sequence>
<reference key="1">
    <citation type="journal article" date="1995" name="Microbiology">
        <title>A 10 kb nucleotide sequence at the 5' flanking region (32 degrees) of srfAA of the Bacillus subtilis chromosome.</title>
        <authorList>
            <person name="Fujishima Y."/>
            <person name="Yamane K."/>
        </authorList>
    </citation>
    <scope>NUCLEOTIDE SEQUENCE [GENOMIC DNA]</scope>
    <source>
        <strain>168</strain>
    </source>
</reference>
<reference key="2">
    <citation type="journal article" date="1996" name="Microbiology">
        <title>The 25 degrees-36 degrees region of the Bacillus subtilis chromosome: determination of the sequence of a 146 kb segment and identification of 113 genes.</title>
        <authorList>
            <person name="Yamane K."/>
            <person name="Kumano M."/>
            <person name="Kurita K."/>
        </authorList>
    </citation>
    <scope>NUCLEOTIDE SEQUENCE [GENOMIC DNA]</scope>
    <source>
        <strain>168</strain>
    </source>
</reference>
<reference key="3">
    <citation type="journal article" date="1997" name="Nature">
        <title>The complete genome sequence of the Gram-positive bacterium Bacillus subtilis.</title>
        <authorList>
            <person name="Kunst F."/>
            <person name="Ogasawara N."/>
            <person name="Moszer I."/>
            <person name="Albertini A.M."/>
            <person name="Alloni G."/>
            <person name="Azevedo V."/>
            <person name="Bertero M.G."/>
            <person name="Bessieres P."/>
            <person name="Bolotin A."/>
            <person name="Borchert S."/>
            <person name="Borriss R."/>
            <person name="Boursier L."/>
            <person name="Brans A."/>
            <person name="Braun M."/>
            <person name="Brignell S.C."/>
            <person name="Bron S."/>
            <person name="Brouillet S."/>
            <person name="Bruschi C.V."/>
            <person name="Caldwell B."/>
            <person name="Capuano V."/>
            <person name="Carter N.M."/>
            <person name="Choi S.-K."/>
            <person name="Codani J.-J."/>
            <person name="Connerton I.F."/>
            <person name="Cummings N.J."/>
            <person name="Daniel R.A."/>
            <person name="Denizot F."/>
            <person name="Devine K.M."/>
            <person name="Duesterhoeft A."/>
            <person name="Ehrlich S.D."/>
            <person name="Emmerson P.T."/>
            <person name="Entian K.-D."/>
            <person name="Errington J."/>
            <person name="Fabret C."/>
            <person name="Ferrari E."/>
            <person name="Foulger D."/>
            <person name="Fritz C."/>
            <person name="Fujita M."/>
            <person name="Fujita Y."/>
            <person name="Fuma S."/>
            <person name="Galizzi A."/>
            <person name="Galleron N."/>
            <person name="Ghim S.-Y."/>
            <person name="Glaser P."/>
            <person name="Goffeau A."/>
            <person name="Golightly E.J."/>
            <person name="Grandi G."/>
            <person name="Guiseppi G."/>
            <person name="Guy B.J."/>
            <person name="Haga K."/>
            <person name="Haiech J."/>
            <person name="Harwood C.R."/>
            <person name="Henaut A."/>
            <person name="Hilbert H."/>
            <person name="Holsappel S."/>
            <person name="Hosono S."/>
            <person name="Hullo M.-F."/>
            <person name="Itaya M."/>
            <person name="Jones L.-M."/>
            <person name="Joris B."/>
            <person name="Karamata D."/>
            <person name="Kasahara Y."/>
            <person name="Klaerr-Blanchard M."/>
            <person name="Klein C."/>
            <person name="Kobayashi Y."/>
            <person name="Koetter P."/>
            <person name="Koningstein G."/>
            <person name="Krogh S."/>
            <person name="Kumano M."/>
            <person name="Kurita K."/>
            <person name="Lapidus A."/>
            <person name="Lardinois S."/>
            <person name="Lauber J."/>
            <person name="Lazarevic V."/>
            <person name="Lee S.-M."/>
            <person name="Levine A."/>
            <person name="Liu H."/>
            <person name="Masuda S."/>
            <person name="Mauel C."/>
            <person name="Medigue C."/>
            <person name="Medina N."/>
            <person name="Mellado R.P."/>
            <person name="Mizuno M."/>
            <person name="Moestl D."/>
            <person name="Nakai S."/>
            <person name="Noback M."/>
            <person name="Noone D."/>
            <person name="O'Reilly M."/>
            <person name="Ogawa K."/>
            <person name="Ogiwara A."/>
            <person name="Oudega B."/>
            <person name="Park S.-H."/>
            <person name="Parro V."/>
            <person name="Pohl T.M."/>
            <person name="Portetelle D."/>
            <person name="Porwollik S."/>
            <person name="Prescott A.M."/>
            <person name="Presecan E."/>
            <person name="Pujic P."/>
            <person name="Purnelle B."/>
            <person name="Rapoport G."/>
            <person name="Rey M."/>
            <person name="Reynolds S."/>
            <person name="Rieger M."/>
            <person name="Rivolta C."/>
            <person name="Rocha E."/>
            <person name="Roche B."/>
            <person name="Rose M."/>
            <person name="Sadaie Y."/>
            <person name="Sato T."/>
            <person name="Scanlan E."/>
            <person name="Schleich S."/>
            <person name="Schroeter R."/>
            <person name="Scoffone F."/>
            <person name="Sekiguchi J."/>
            <person name="Sekowska A."/>
            <person name="Seror S.J."/>
            <person name="Serror P."/>
            <person name="Shin B.-S."/>
            <person name="Soldo B."/>
            <person name="Sorokin A."/>
            <person name="Tacconi E."/>
            <person name="Takagi T."/>
            <person name="Takahashi H."/>
            <person name="Takemaru K."/>
            <person name="Takeuchi M."/>
            <person name="Tamakoshi A."/>
            <person name="Tanaka T."/>
            <person name="Terpstra P."/>
            <person name="Tognoni A."/>
            <person name="Tosato V."/>
            <person name="Uchiyama S."/>
            <person name="Vandenbol M."/>
            <person name="Vannier F."/>
            <person name="Vassarotti A."/>
            <person name="Viari A."/>
            <person name="Wambutt R."/>
            <person name="Wedler E."/>
            <person name="Wedler H."/>
            <person name="Weitzenegger T."/>
            <person name="Winters P."/>
            <person name="Wipat A."/>
            <person name="Yamamoto H."/>
            <person name="Yamane K."/>
            <person name="Yasumoto K."/>
            <person name="Yata K."/>
            <person name="Yoshida K."/>
            <person name="Yoshikawa H.-F."/>
            <person name="Zumstein E."/>
            <person name="Yoshikawa H."/>
            <person name="Danchin A."/>
        </authorList>
    </citation>
    <scope>NUCLEOTIDE SEQUENCE [LARGE SCALE GENOMIC DNA]</scope>
    <source>
        <strain>168</strain>
    </source>
</reference>
<reference key="4">
    <citation type="journal article" date="1994" name="Microbiology">
        <title>Identification of TlpC, a novel 62 kDa MCP-like protein from Bacillus subtilis.</title>
        <authorList>
            <person name="Hanlon D.W."/>
            <person name="Rosario M.M.L."/>
            <person name="Ordal G.W."/>
            <person name="Venema G."/>
            <person name="van Sinderen D."/>
        </authorList>
    </citation>
    <scope>NUCLEOTIDE SEQUENCE [GENOMIC DNA] OF 173-185</scope>
    <source>
        <strain>168 / OI1085</strain>
    </source>
</reference>
<reference key="5">
    <citation type="journal article" date="1999" name="J. Bacteriol.">
        <title>Bacillus subtilis yckG and yckF encode two key enzymes of the ribulose monophosphate pathway used by methylotrophs, and yckH is required for their expression.</title>
        <authorList>
            <person name="Yasueda H."/>
            <person name="Kawahara Y."/>
            <person name="Sugimoto S."/>
        </authorList>
    </citation>
    <scope>CHARACTERIZATION</scope>
    <source>
        <strain>168</strain>
    </source>
</reference>
<reference key="6">
    <citation type="journal article" date="2004" name="J. Struct. Biol.">
        <title>Crystal structure of Bacillus subtilis YckF: structural and functional evolution.</title>
        <authorList>
            <person name="Sanishvili R."/>
            <person name="Wu R."/>
            <person name="Kim D.E."/>
            <person name="Watson J.D."/>
            <person name="Collart F."/>
            <person name="Joachimiak A."/>
        </authorList>
    </citation>
    <scope>X-RAY CRYSTALLOGRAPHY (1.95 ANGSTROMS)</scope>
    <scope>SUBUNIT</scope>
</reference>
<reference key="7">
    <citation type="journal article" date="2005" name="Proteins">
        <title>Structural analysis of a set of proteins resulting from a bacterial genomics project.</title>
        <authorList>
            <person name="Badger J."/>
            <person name="Sauder J.M."/>
            <person name="Adams J.M."/>
            <person name="Antonysamy S."/>
            <person name="Bain K."/>
            <person name="Bergseid M.G."/>
            <person name="Buchanan S.G."/>
            <person name="Buchanan M.D."/>
            <person name="Batiyenko Y."/>
            <person name="Christopher J.A."/>
            <person name="Emtage S."/>
            <person name="Eroshkina A."/>
            <person name="Feil I."/>
            <person name="Furlong E.B."/>
            <person name="Gajiwala K.S."/>
            <person name="Gao X."/>
            <person name="He D."/>
            <person name="Hendle J."/>
            <person name="Huber A."/>
            <person name="Hoda K."/>
            <person name="Kearins P."/>
            <person name="Kissinger C."/>
            <person name="Laubert B."/>
            <person name="Lewis H.A."/>
            <person name="Lin J."/>
            <person name="Loomis K."/>
            <person name="Lorimer D."/>
            <person name="Louie G."/>
            <person name="Maletic M."/>
            <person name="Marsh C.D."/>
            <person name="Miller I."/>
            <person name="Molinari J."/>
            <person name="Muller-Dieckmann H.J."/>
            <person name="Newman J.M."/>
            <person name="Noland B.W."/>
            <person name="Pagarigan B."/>
            <person name="Park F."/>
            <person name="Peat T.S."/>
            <person name="Post K.W."/>
            <person name="Radojicic S."/>
            <person name="Ramos A."/>
            <person name="Romero R."/>
            <person name="Rutter M.E."/>
            <person name="Sanderson W.E."/>
            <person name="Schwinn K.D."/>
            <person name="Tresser J."/>
            <person name="Winhoven J."/>
            <person name="Wright T.A."/>
            <person name="Wu L."/>
            <person name="Xu J."/>
            <person name="Harris T.J.R."/>
        </authorList>
    </citation>
    <scope>X-RAY CRYSTALLOGRAPHY (2.6 ANGSTROMS) OF 2-185</scope>
</reference>
<organism>
    <name type="scientific">Bacillus subtilis (strain 168)</name>
    <dbReference type="NCBI Taxonomy" id="224308"/>
    <lineage>
        <taxon>Bacteria</taxon>
        <taxon>Bacillati</taxon>
        <taxon>Bacillota</taxon>
        <taxon>Bacilli</taxon>
        <taxon>Bacillales</taxon>
        <taxon>Bacillaceae</taxon>
        <taxon>Bacillus</taxon>
    </lineage>
</organism>
<accession>P42404</accession>
<dbReference type="EC" id="5.3.1.27"/>
<dbReference type="EMBL" id="D30762">
    <property type="protein sequence ID" value="BAA06433.1"/>
    <property type="molecule type" value="Genomic_DNA"/>
</dbReference>
<dbReference type="EMBL" id="D50453">
    <property type="protein sequence ID" value="BAA08979.1"/>
    <property type="molecule type" value="Genomic_DNA"/>
</dbReference>
<dbReference type="EMBL" id="AL009126">
    <property type="protein sequence ID" value="CAB12139.1"/>
    <property type="molecule type" value="Genomic_DNA"/>
</dbReference>
<dbReference type="EMBL" id="Z34005">
    <property type="status" value="NOT_ANNOTATED_CDS"/>
    <property type="molecule type" value="Genomic_DNA"/>
</dbReference>
<dbReference type="PIR" id="H69760">
    <property type="entry name" value="H69760"/>
</dbReference>
<dbReference type="RefSeq" id="NP_388227.1">
    <property type="nucleotide sequence ID" value="NC_000964.3"/>
</dbReference>
<dbReference type="RefSeq" id="WP_003246343.1">
    <property type="nucleotide sequence ID" value="NZ_OZ025638.1"/>
</dbReference>
<dbReference type="PDB" id="1M3S">
    <property type="method" value="X-ray"/>
    <property type="resolution" value="1.95 A"/>
    <property type="chains" value="A/B=1-185"/>
</dbReference>
<dbReference type="PDB" id="1VIV">
    <property type="method" value="X-ray"/>
    <property type="resolution" value="2.60 A"/>
    <property type="chains" value="A/B=2-185"/>
</dbReference>
<dbReference type="PDBsum" id="1M3S"/>
<dbReference type="PDBsum" id="1VIV"/>
<dbReference type="SMR" id="P42404"/>
<dbReference type="FunCoup" id="P42404">
    <property type="interactions" value="194"/>
</dbReference>
<dbReference type="STRING" id="224308.BSU03450"/>
<dbReference type="PaxDb" id="224308-BSU03450"/>
<dbReference type="EnsemblBacteria" id="CAB12139">
    <property type="protein sequence ID" value="CAB12139"/>
    <property type="gene ID" value="BSU_03450"/>
</dbReference>
<dbReference type="GeneID" id="938313"/>
<dbReference type="KEGG" id="bsu:BSU03450"/>
<dbReference type="PATRIC" id="fig|224308.179.peg.362"/>
<dbReference type="eggNOG" id="COG0794">
    <property type="taxonomic scope" value="Bacteria"/>
</dbReference>
<dbReference type="InParanoid" id="P42404"/>
<dbReference type="OrthoDB" id="9797832at2"/>
<dbReference type="PhylomeDB" id="P42404"/>
<dbReference type="BioCyc" id="BSUB:BSU03450-MONOMER"/>
<dbReference type="BRENDA" id="5.3.1.27">
    <property type="organism ID" value="658"/>
</dbReference>
<dbReference type="UniPathway" id="UPA00294">
    <property type="reaction ID" value="UER00435"/>
</dbReference>
<dbReference type="EvolutionaryTrace" id="P42404"/>
<dbReference type="Proteomes" id="UP000001570">
    <property type="component" value="Chromosome"/>
</dbReference>
<dbReference type="GO" id="GO:0043800">
    <property type="term" value="F:6-phospho-3-hexuloisomerase activity"/>
    <property type="evidence" value="ECO:0007669"/>
    <property type="project" value="UniProtKB-EC"/>
</dbReference>
<dbReference type="GO" id="GO:0097367">
    <property type="term" value="F:carbohydrate derivative binding"/>
    <property type="evidence" value="ECO:0007669"/>
    <property type="project" value="InterPro"/>
</dbReference>
<dbReference type="GO" id="GO:1901135">
    <property type="term" value="P:carbohydrate derivative metabolic process"/>
    <property type="evidence" value="ECO:0007669"/>
    <property type="project" value="InterPro"/>
</dbReference>
<dbReference type="GO" id="GO:0019647">
    <property type="term" value="P:formaldehyde assimilation via ribulose monophosphate cycle"/>
    <property type="evidence" value="ECO:0007669"/>
    <property type="project" value="UniProtKB-UniPathway"/>
</dbReference>
<dbReference type="GO" id="GO:0009636">
    <property type="term" value="P:response to toxic substance"/>
    <property type="evidence" value="ECO:0007669"/>
    <property type="project" value="UniProtKB-KW"/>
</dbReference>
<dbReference type="CDD" id="cd05005">
    <property type="entry name" value="SIS_PHI"/>
    <property type="match status" value="1"/>
</dbReference>
<dbReference type="Gene3D" id="3.40.50.10490">
    <property type="entry name" value="Glucose-6-phosphate isomerase like protein, domain 1"/>
    <property type="match status" value="1"/>
</dbReference>
<dbReference type="InterPro" id="IPR017552">
    <property type="entry name" value="PHI/rmpB"/>
</dbReference>
<dbReference type="InterPro" id="IPR001347">
    <property type="entry name" value="SIS_dom"/>
</dbReference>
<dbReference type="InterPro" id="IPR046348">
    <property type="entry name" value="SIS_dom_sf"/>
</dbReference>
<dbReference type="NCBIfam" id="TIGR03127">
    <property type="entry name" value="RuMP_HxlB"/>
    <property type="match status" value="1"/>
</dbReference>
<dbReference type="PANTHER" id="PTHR43443">
    <property type="entry name" value="3-HEXULOSE-6-PHOSPHATE ISOMERASE"/>
    <property type="match status" value="1"/>
</dbReference>
<dbReference type="PANTHER" id="PTHR43443:SF1">
    <property type="entry name" value="3-HEXULOSE-6-PHOSPHATE ISOMERASE"/>
    <property type="match status" value="1"/>
</dbReference>
<dbReference type="Pfam" id="PF01380">
    <property type="entry name" value="SIS"/>
    <property type="match status" value="1"/>
</dbReference>
<dbReference type="SUPFAM" id="SSF53697">
    <property type="entry name" value="SIS domain"/>
    <property type="match status" value="1"/>
</dbReference>
<dbReference type="PROSITE" id="PS51464">
    <property type="entry name" value="SIS"/>
    <property type="match status" value="1"/>
</dbReference>
<name>PHI_BACSU</name>
<feature type="chain" id="PRO_0000136566" description="3-hexulose-6-phosphate isomerase">
    <location>
        <begin position="1"/>
        <end position="185"/>
    </location>
</feature>
<feature type="domain" description="SIS" evidence="2">
    <location>
        <begin position="29"/>
        <end position="172"/>
    </location>
</feature>
<feature type="active site" description="Proton acceptor" evidence="4">
    <location>
        <position position="152"/>
    </location>
</feature>
<feature type="binding site" evidence="1">
    <location>
        <position position="47"/>
    </location>
    <ligand>
        <name>substrate</name>
    </ligand>
</feature>
<feature type="binding site" evidence="1">
    <location>
        <begin position="86"/>
        <end position="91"/>
    </location>
    <ligand>
        <name>substrate</name>
    </ligand>
</feature>
<feature type="helix" evidence="5">
    <location>
        <begin position="3"/>
        <end position="18"/>
    </location>
</feature>
<feature type="helix" evidence="5">
    <location>
        <begin position="23"/>
        <end position="35"/>
    </location>
</feature>
<feature type="strand" evidence="5">
    <location>
        <begin position="39"/>
        <end position="42"/>
    </location>
</feature>
<feature type="helix" evidence="5">
    <location>
        <begin position="45"/>
        <end position="60"/>
    </location>
</feature>
<feature type="strand" evidence="5">
    <location>
        <begin position="65"/>
        <end position="67"/>
    </location>
</feature>
<feature type="strand" evidence="5">
    <location>
        <begin position="81"/>
        <end position="85"/>
    </location>
</feature>
<feature type="strand" evidence="5">
    <location>
        <begin position="87"/>
        <end position="89"/>
    </location>
</feature>
<feature type="helix" evidence="5">
    <location>
        <begin position="92"/>
        <end position="103"/>
    </location>
</feature>
<feature type="strand" evidence="5">
    <location>
        <begin position="107"/>
        <end position="113"/>
    </location>
</feature>
<feature type="helix" evidence="5">
    <location>
        <begin position="118"/>
        <end position="122"/>
    </location>
</feature>
<feature type="strand" evidence="5">
    <location>
        <begin position="124"/>
        <end position="128"/>
    </location>
</feature>
<feature type="helix" evidence="6">
    <location>
        <begin position="133"/>
        <end position="137"/>
    </location>
</feature>
<feature type="helix" evidence="5">
    <location>
        <begin position="149"/>
        <end position="169"/>
    </location>
</feature>
<feature type="turn" evidence="5">
    <location>
        <begin position="174"/>
        <end position="176"/>
    </location>
</feature>
<proteinExistence type="evidence at protein level"/>
<gene>
    <name type="primary">hxlB</name>
    <name type="synonym">yckF</name>
    <name type="ordered locus">BSU03450</name>
</gene>
<keyword id="KW-0002">3D-structure</keyword>
<keyword id="KW-0119">Carbohydrate metabolism</keyword>
<keyword id="KW-0216">Detoxification</keyword>
<keyword id="KW-0413">Isomerase</keyword>
<keyword id="KW-1185">Reference proteome</keyword>
<evidence type="ECO:0000255" key="1"/>
<evidence type="ECO:0000255" key="2">
    <source>
        <dbReference type="PROSITE-ProRule" id="PRU00797"/>
    </source>
</evidence>
<evidence type="ECO:0000269" key="3">
    <source>
    </source>
</evidence>
<evidence type="ECO:0000305" key="4"/>
<evidence type="ECO:0007829" key="5">
    <source>
        <dbReference type="PDB" id="1M3S"/>
    </source>
</evidence>
<evidence type="ECO:0007829" key="6">
    <source>
        <dbReference type="PDB" id="1VIV"/>
    </source>
</evidence>
<comment type="function">
    <text>Catalyzes the isomerization between 3-hexulose 6-phosphate and fructose 6-phosphate. Together with HxlA, may act as a formaldehyde detoxification system.</text>
</comment>
<comment type="catalytic activity">
    <reaction>
        <text>D-arabino-hex-3-ulose 6-phosphate = beta-D-fructose 6-phosphate</text>
        <dbReference type="Rhea" id="RHEA:25900"/>
        <dbReference type="ChEBI" id="CHEBI:57634"/>
        <dbReference type="ChEBI" id="CHEBI:58542"/>
        <dbReference type="EC" id="5.3.1.27"/>
    </reaction>
</comment>
<comment type="pathway">
    <text>One-carbon metabolism; formaldehyde assimilation via RuMP pathway; D-fructose 6-phosphate from D-ribulose 5-phosphate and formaldehyde: step 2/2.</text>
</comment>
<comment type="subunit">
    <text evidence="3">Homotetramer.</text>
</comment>
<comment type="induction">
    <text>By formaldehyde, under the control of HxlR. Not induced by methanol, formate, or methylamine.</text>
</comment>
<comment type="similarity">
    <text evidence="4">Belongs to the SIS family. PHI subfamily.</text>
</comment>
<protein>
    <recommendedName>
        <fullName>3-hexulose-6-phosphate isomerase</fullName>
        <ecNumber>5.3.1.27</ecNumber>
    </recommendedName>
    <alternativeName>
        <fullName>6-phospho-3-hexuloisomerase</fullName>
        <shortName>PHI</shortName>
    </alternativeName>
</protein>